<feature type="chain" id="PRO_0000303988" description="Putative uncharacterized protein C9E9.02">
    <location>
        <begin position="1"/>
        <end position="98"/>
    </location>
</feature>
<accession>A6X978</accession>
<proteinExistence type="predicted"/>
<dbReference type="EMBL" id="CU329670">
    <property type="protein sequence ID" value="CAO77647.1"/>
    <property type="molecule type" value="Genomic_DNA"/>
</dbReference>
<dbReference type="RefSeq" id="XP_001713106.1">
    <property type="nucleotide sequence ID" value="XM_001713054.2"/>
</dbReference>
<dbReference type="BioGRID" id="858095">
    <property type="interactions" value="1"/>
</dbReference>
<dbReference type="PaxDb" id="4896-SPAC9E9.02.1"/>
<dbReference type="EnsemblFungi" id="SPAC9E9.02.1">
    <property type="protein sequence ID" value="SPAC9E9.02.1:pep"/>
    <property type="gene ID" value="SPAC9E9.02"/>
</dbReference>
<dbReference type="PomBase" id="SPAC9E9.02"/>
<dbReference type="VEuPathDB" id="FungiDB:SPAC9E9.02"/>
<dbReference type="HOGENOM" id="CLU_2334842_0_0_1"/>
<dbReference type="InParanoid" id="A6X978"/>
<dbReference type="PRO" id="PR:A6X978"/>
<dbReference type="Proteomes" id="UP000002485">
    <property type="component" value="Chromosome I"/>
</dbReference>
<reference key="1">
    <citation type="journal article" date="2002" name="Nature">
        <title>The genome sequence of Schizosaccharomyces pombe.</title>
        <authorList>
            <person name="Wood V."/>
            <person name="Gwilliam R."/>
            <person name="Rajandream M.A."/>
            <person name="Lyne M.H."/>
            <person name="Lyne R."/>
            <person name="Stewart A."/>
            <person name="Sgouros J.G."/>
            <person name="Peat N."/>
            <person name="Hayles J."/>
            <person name="Baker S.G."/>
            <person name="Basham D."/>
            <person name="Bowman S."/>
            <person name="Brooks K."/>
            <person name="Brown D."/>
            <person name="Brown S."/>
            <person name="Chillingworth T."/>
            <person name="Churcher C.M."/>
            <person name="Collins M."/>
            <person name="Connor R."/>
            <person name="Cronin A."/>
            <person name="Davis P."/>
            <person name="Feltwell T."/>
            <person name="Fraser A."/>
            <person name="Gentles S."/>
            <person name="Goble A."/>
            <person name="Hamlin N."/>
            <person name="Harris D.E."/>
            <person name="Hidalgo J."/>
            <person name="Hodgson G."/>
            <person name="Holroyd S."/>
            <person name="Hornsby T."/>
            <person name="Howarth S."/>
            <person name="Huckle E.J."/>
            <person name="Hunt S."/>
            <person name="Jagels K."/>
            <person name="James K.D."/>
            <person name="Jones L."/>
            <person name="Jones M."/>
            <person name="Leather S."/>
            <person name="McDonald S."/>
            <person name="McLean J."/>
            <person name="Mooney P."/>
            <person name="Moule S."/>
            <person name="Mungall K.L."/>
            <person name="Murphy L.D."/>
            <person name="Niblett D."/>
            <person name="Odell C."/>
            <person name="Oliver K."/>
            <person name="O'Neil S."/>
            <person name="Pearson D."/>
            <person name="Quail M.A."/>
            <person name="Rabbinowitsch E."/>
            <person name="Rutherford K.M."/>
            <person name="Rutter S."/>
            <person name="Saunders D."/>
            <person name="Seeger K."/>
            <person name="Sharp S."/>
            <person name="Skelton J."/>
            <person name="Simmonds M.N."/>
            <person name="Squares R."/>
            <person name="Squares S."/>
            <person name="Stevens K."/>
            <person name="Taylor K."/>
            <person name="Taylor R.G."/>
            <person name="Tivey A."/>
            <person name="Walsh S.V."/>
            <person name="Warren T."/>
            <person name="Whitehead S."/>
            <person name="Woodward J.R."/>
            <person name="Volckaert G."/>
            <person name="Aert R."/>
            <person name="Robben J."/>
            <person name="Grymonprez B."/>
            <person name="Weltjens I."/>
            <person name="Vanstreels E."/>
            <person name="Rieger M."/>
            <person name="Schaefer M."/>
            <person name="Mueller-Auer S."/>
            <person name="Gabel C."/>
            <person name="Fuchs M."/>
            <person name="Duesterhoeft A."/>
            <person name="Fritzc C."/>
            <person name="Holzer E."/>
            <person name="Moestl D."/>
            <person name="Hilbert H."/>
            <person name="Borzym K."/>
            <person name="Langer I."/>
            <person name="Beck A."/>
            <person name="Lehrach H."/>
            <person name="Reinhardt R."/>
            <person name="Pohl T.M."/>
            <person name="Eger P."/>
            <person name="Zimmermann W."/>
            <person name="Wedler H."/>
            <person name="Wambutt R."/>
            <person name="Purnelle B."/>
            <person name="Goffeau A."/>
            <person name="Cadieu E."/>
            <person name="Dreano S."/>
            <person name="Gloux S."/>
            <person name="Lelaure V."/>
            <person name="Mottier S."/>
            <person name="Galibert F."/>
            <person name="Aves S.J."/>
            <person name="Xiang Z."/>
            <person name="Hunt C."/>
            <person name="Moore K."/>
            <person name="Hurst S.M."/>
            <person name="Lucas M."/>
            <person name="Rochet M."/>
            <person name="Gaillardin C."/>
            <person name="Tallada V.A."/>
            <person name="Garzon A."/>
            <person name="Thode G."/>
            <person name="Daga R.R."/>
            <person name="Cruzado L."/>
            <person name="Jimenez J."/>
            <person name="Sanchez M."/>
            <person name="del Rey F."/>
            <person name="Benito J."/>
            <person name="Dominguez A."/>
            <person name="Revuelta J.L."/>
            <person name="Moreno S."/>
            <person name="Armstrong J."/>
            <person name="Forsburg S.L."/>
            <person name="Cerutti L."/>
            <person name="Lowe T."/>
            <person name="McCombie W.R."/>
            <person name="Paulsen I."/>
            <person name="Potashkin J."/>
            <person name="Shpakovski G.V."/>
            <person name="Ussery D."/>
            <person name="Barrell B.G."/>
            <person name="Nurse P."/>
        </authorList>
    </citation>
    <scope>NUCLEOTIDE SEQUENCE [LARGE SCALE GENOMIC DNA]</scope>
    <source>
        <strain>972 / ATCC 24843</strain>
    </source>
</reference>
<sequence>MDVDFANAKHKLHCLLKKNFLLTIRFSSLVSIQYIPFSNRLYEIISIALNPCNFSKSLFWLRKKIKNSVLLKTSFDSNETIFFLYSLHRCVYYLFIYL</sequence>
<keyword id="KW-1185">Reference proteome</keyword>
<gene>
    <name type="ORF">SPAC9E9.02</name>
</gene>
<name>YF12_SCHPO</name>
<organism>
    <name type="scientific">Schizosaccharomyces pombe (strain 972 / ATCC 24843)</name>
    <name type="common">Fission yeast</name>
    <dbReference type="NCBI Taxonomy" id="284812"/>
    <lineage>
        <taxon>Eukaryota</taxon>
        <taxon>Fungi</taxon>
        <taxon>Dikarya</taxon>
        <taxon>Ascomycota</taxon>
        <taxon>Taphrinomycotina</taxon>
        <taxon>Schizosaccharomycetes</taxon>
        <taxon>Schizosaccharomycetales</taxon>
        <taxon>Schizosaccharomycetaceae</taxon>
        <taxon>Schizosaccharomyces</taxon>
    </lineage>
</organism>
<protein>
    <recommendedName>
        <fullName>Putative uncharacterized protein C9E9.02</fullName>
    </recommendedName>
</protein>